<name>CP1A1_DICLA</name>
<dbReference type="EC" id="1.14.14.1"/>
<dbReference type="EMBL" id="U78316">
    <property type="protein sequence ID" value="AAB36951.1"/>
    <property type="molecule type" value="mRNA"/>
</dbReference>
<dbReference type="SMR" id="P79716"/>
<dbReference type="Proteomes" id="UP000694389">
    <property type="component" value="Unplaced"/>
</dbReference>
<dbReference type="GO" id="GO:0005789">
    <property type="term" value="C:endoplasmic reticulum membrane"/>
    <property type="evidence" value="ECO:0007669"/>
    <property type="project" value="UniProtKB-SubCell"/>
</dbReference>
<dbReference type="GO" id="GO:0020037">
    <property type="term" value="F:heme binding"/>
    <property type="evidence" value="ECO:0007669"/>
    <property type="project" value="InterPro"/>
</dbReference>
<dbReference type="GO" id="GO:0005506">
    <property type="term" value="F:iron ion binding"/>
    <property type="evidence" value="ECO:0007669"/>
    <property type="project" value="InterPro"/>
</dbReference>
<dbReference type="GO" id="GO:0004508">
    <property type="term" value="F:steroid 17-alpha-monooxygenase activity"/>
    <property type="evidence" value="ECO:0007669"/>
    <property type="project" value="TreeGrafter"/>
</dbReference>
<dbReference type="GO" id="GO:0042446">
    <property type="term" value="P:hormone biosynthetic process"/>
    <property type="evidence" value="ECO:0007669"/>
    <property type="project" value="TreeGrafter"/>
</dbReference>
<dbReference type="GO" id="GO:0042448">
    <property type="term" value="P:progesterone metabolic process"/>
    <property type="evidence" value="ECO:0007669"/>
    <property type="project" value="TreeGrafter"/>
</dbReference>
<dbReference type="CDD" id="cd20676">
    <property type="entry name" value="CYP1A"/>
    <property type="match status" value="1"/>
</dbReference>
<dbReference type="FunFam" id="1.10.630.10:FF:000002">
    <property type="entry name" value="Cytochrome P450 1A1"/>
    <property type="match status" value="1"/>
</dbReference>
<dbReference type="Gene3D" id="1.10.630.10">
    <property type="entry name" value="Cytochrome P450"/>
    <property type="match status" value="1"/>
</dbReference>
<dbReference type="InterPro" id="IPR001128">
    <property type="entry name" value="Cyt_P450"/>
</dbReference>
<dbReference type="InterPro" id="IPR017972">
    <property type="entry name" value="Cyt_P450_CS"/>
</dbReference>
<dbReference type="InterPro" id="IPR002401">
    <property type="entry name" value="Cyt_P450_E_grp-I"/>
</dbReference>
<dbReference type="InterPro" id="IPR008066">
    <property type="entry name" value="Cyt_P450_E_grp-I_CYP1"/>
</dbReference>
<dbReference type="InterPro" id="IPR036396">
    <property type="entry name" value="Cyt_P450_sf"/>
</dbReference>
<dbReference type="PANTHER" id="PTHR24289:SF21">
    <property type="entry name" value="CYTOCHROME P450 1A"/>
    <property type="match status" value="1"/>
</dbReference>
<dbReference type="PANTHER" id="PTHR24289">
    <property type="entry name" value="STEROID 17-ALPHA-HYDROXYLASE/17,20 LYASE"/>
    <property type="match status" value="1"/>
</dbReference>
<dbReference type="Pfam" id="PF00067">
    <property type="entry name" value="p450"/>
    <property type="match status" value="1"/>
</dbReference>
<dbReference type="PRINTS" id="PR00463">
    <property type="entry name" value="EP450I"/>
</dbReference>
<dbReference type="PRINTS" id="PR01683">
    <property type="entry name" value="EP450ICYP1A"/>
</dbReference>
<dbReference type="PRINTS" id="PR00385">
    <property type="entry name" value="P450"/>
</dbReference>
<dbReference type="SUPFAM" id="SSF48264">
    <property type="entry name" value="Cytochrome P450"/>
    <property type="match status" value="1"/>
</dbReference>
<dbReference type="PROSITE" id="PS00086">
    <property type="entry name" value="CYTOCHROME_P450"/>
    <property type="match status" value="1"/>
</dbReference>
<proteinExistence type="evidence at transcript level"/>
<comment type="function">
    <text>Cytochromes P450 are a group of heme-thiolate monooxygenases. In liver microsomes, this enzyme is involved in an NADPH-dependent electron transport pathway. It oxidizes a variety of structurally unrelated compounds, including steroids, fatty acids, and xenobiotics.</text>
</comment>
<comment type="catalytic activity">
    <reaction>
        <text>an organic molecule + reduced [NADPH--hemoprotein reductase] + O2 = an alcohol + oxidized [NADPH--hemoprotein reductase] + H2O + H(+)</text>
        <dbReference type="Rhea" id="RHEA:17149"/>
        <dbReference type="Rhea" id="RHEA-COMP:11964"/>
        <dbReference type="Rhea" id="RHEA-COMP:11965"/>
        <dbReference type="ChEBI" id="CHEBI:15377"/>
        <dbReference type="ChEBI" id="CHEBI:15378"/>
        <dbReference type="ChEBI" id="CHEBI:15379"/>
        <dbReference type="ChEBI" id="CHEBI:30879"/>
        <dbReference type="ChEBI" id="CHEBI:57618"/>
        <dbReference type="ChEBI" id="CHEBI:58210"/>
        <dbReference type="ChEBI" id="CHEBI:142491"/>
        <dbReference type="EC" id="1.14.14.1"/>
    </reaction>
</comment>
<comment type="cofactor">
    <cofactor evidence="1">
        <name>heme</name>
        <dbReference type="ChEBI" id="CHEBI:30413"/>
    </cofactor>
</comment>
<comment type="subcellular location">
    <subcellularLocation>
        <location>Endoplasmic reticulum membrane</location>
        <topology>Peripheral membrane protein</topology>
    </subcellularLocation>
    <subcellularLocation>
        <location>Microsome membrane</location>
        <topology>Peripheral membrane protein</topology>
    </subcellularLocation>
</comment>
<comment type="similarity">
    <text evidence="2">Belongs to the cytochrome P450 family.</text>
</comment>
<protein>
    <recommendedName>
        <fullName>Cytochrome P450 1A1</fullName>
        <ecNumber>1.14.14.1</ecNumber>
    </recommendedName>
    <alternativeName>
        <fullName>CYPIA1</fullName>
    </alternativeName>
</protein>
<accession>P79716</accession>
<reference key="1">
    <citation type="journal article" date="1998" name="Comp. Biochem. Physiol.">
        <title>Molecular cloning of a CYP1A cDNA from the teleost fish Dicentrarchus labrax.</title>
        <authorList>
            <person name="Stien X."/>
            <person name="Amichot M."/>
            <person name="Berge J.-B."/>
            <person name="Lafaurie M."/>
        </authorList>
    </citation>
    <scope>NUCLEOTIDE SEQUENCE [MRNA]</scope>
    <source>
        <tissue>Liver</tissue>
    </source>
</reference>
<gene>
    <name type="primary">cyp1a1</name>
</gene>
<evidence type="ECO:0000250" key="1"/>
<evidence type="ECO:0000305" key="2"/>
<organism>
    <name type="scientific">Dicentrarchus labrax</name>
    <name type="common">European seabass</name>
    <name type="synonym">Morone labrax</name>
    <dbReference type="NCBI Taxonomy" id="13489"/>
    <lineage>
        <taxon>Eukaryota</taxon>
        <taxon>Metazoa</taxon>
        <taxon>Chordata</taxon>
        <taxon>Craniata</taxon>
        <taxon>Vertebrata</taxon>
        <taxon>Euteleostomi</taxon>
        <taxon>Actinopterygii</taxon>
        <taxon>Neopterygii</taxon>
        <taxon>Teleostei</taxon>
        <taxon>Neoteleostei</taxon>
        <taxon>Acanthomorphata</taxon>
        <taxon>Eupercaria</taxon>
        <taxon>Moronidae</taxon>
        <taxon>Dicentrarchus</taxon>
    </lineage>
</organism>
<sequence length="520" mass="58744">MVLMILPFIGSVSVSESLVALTTVCLVYLILKFFRTEIPEGLHRLPGPKPLPLIGNVLEVGNKPYLSLTAMSKRYGDVFRFRLGMRPSGCLSGSETVRKALIKQGDEFAGRPDLYSFRFINDGKSLAFSTDKAGVWRALRKLAYSALRSFSSLEESTPRDSCVLEEHSAKEGEYLYSNMLNAVMKVTGSFDPFRHIVVSVANVICGMCFGRRYGHNDQELLSLVNLSDPFGQVVGSGNPADFIPVLQFLPSTTMKNFMDINARFNKFVQKIVSEHYTTYDKDNIRDITDSLIDHCEDRKLDENANVQMSDEKIVGIVNDLFGAGFDTISTALSWSVMYLVAYPEIEERLYQELKENVGLDRTPLLCDRPNLPFLEAFILEIFRHSSFLPFTIPHCTSKDTSLNGYFIPKDTCVFINQWQINHDPELWKDPSSFNPDRFLSADGTELNKLEGEKVMVFGLGKRRCIGEVIARNGVFLFLAIIVQKLHFKTLPGEPLDMTPEYGLTMKHKRCHLRATMRASE</sequence>
<feature type="chain" id="PRO_0000051635" description="Cytochrome P450 1A1">
    <location>
        <begin position="1"/>
        <end position="520"/>
    </location>
</feature>
<feature type="binding site" evidence="1">
    <location>
        <position position="230"/>
    </location>
    <ligand>
        <name>substrate</name>
    </ligand>
</feature>
<feature type="binding site" description="axial binding residue" evidence="1">
    <location>
        <position position="464"/>
    </location>
    <ligand>
        <name>heme</name>
        <dbReference type="ChEBI" id="CHEBI:30413"/>
    </ligand>
    <ligandPart>
        <name>Fe</name>
        <dbReference type="ChEBI" id="CHEBI:18248"/>
    </ligandPart>
</feature>
<keyword id="KW-0256">Endoplasmic reticulum</keyword>
<keyword id="KW-0349">Heme</keyword>
<keyword id="KW-0408">Iron</keyword>
<keyword id="KW-0472">Membrane</keyword>
<keyword id="KW-0479">Metal-binding</keyword>
<keyword id="KW-0492">Microsome</keyword>
<keyword id="KW-0503">Monooxygenase</keyword>
<keyword id="KW-0560">Oxidoreductase</keyword>
<keyword id="KW-1185">Reference proteome</keyword>